<reference key="1">
    <citation type="journal article" date="2005" name="Nature">
        <title>Genomic sequence of the pathogenic and allergenic filamentous fungus Aspergillus fumigatus.</title>
        <authorList>
            <person name="Nierman W.C."/>
            <person name="Pain A."/>
            <person name="Anderson M.J."/>
            <person name="Wortman J.R."/>
            <person name="Kim H.S."/>
            <person name="Arroyo J."/>
            <person name="Berriman M."/>
            <person name="Abe K."/>
            <person name="Archer D.B."/>
            <person name="Bermejo C."/>
            <person name="Bennett J.W."/>
            <person name="Bowyer P."/>
            <person name="Chen D."/>
            <person name="Collins M."/>
            <person name="Coulsen R."/>
            <person name="Davies R."/>
            <person name="Dyer P.S."/>
            <person name="Farman M.L."/>
            <person name="Fedorova N."/>
            <person name="Fedorova N.D."/>
            <person name="Feldblyum T.V."/>
            <person name="Fischer R."/>
            <person name="Fosker N."/>
            <person name="Fraser A."/>
            <person name="Garcia J.L."/>
            <person name="Garcia M.J."/>
            <person name="Goble A."/>
            <person name="Goldman G.H."/>
            <person name="Gomi K."/>
            <person name="Griffith-Jones S."/>
            <person name="Gwilliam R."/>
            <person name="Haas B.J."/>
            <person name="Haas H."/>
            <person name="Harris D.E."/>
            <person name="Horiuchi H."/>
            <person name="Huang J."/>
            <person name="Humphray S."/>
            <person name="Jimenez J."/>
            <person name="Keller N."/>
            <person name="Khouri H."/>
            <person name="Kitamoto K."/>
            <person name="Kobayashi T."/>
            <person name="Konzack S."/>
            <person name="Kulkarni R."/>
            <person name="Kumagai T."/>
            <person name="Lafton A."/>
            <person name="Latge J.-P."/>
            <person name="Li W."/>
            <person name="Lord A."/>
            <person name="Lu C."/>
            <person name="Majoros W.H."/>
            <person name="May G.S."/>
            <person name="Miller B.L."/>
            <person name="Mohamoud Y."/>
            <person name="Molina M."/>
            <person name="Monod M."/>
            <person name="Mouyna I."/>
            <person name="Mulligan S."/>
            <person name="Murphy L.D."/>
            <person name="O'Neil S."/>
            <person name="Paulsen I."/>
            <person name="Penalva M.A."/>
            <person name="Pertea M."/>
            <person name="Price C."/>
            <person name="Pritchard B.L."/>
            <person name="Quail M.A."/>
            <person name="Rabbinowitsch E."/>
            <person name="Rawlins N."/>
            <person name="Rajandream M.A."/>
            <person name="Reichard U."/>
            <person name="Renauld H."/>
            <person name="Robson G.D."/>
            <person name="Rodriguez de Cordoba S."/>
            <person name="Rodriguez-Pena J.M."/>
            <person name="Ronning C.M."/>
            <person name="Rutter S."/>
            <person name="Salzberg S.L."/>
            <person name="Sanchez M."/>
            <person name="Sanchez-Ferrero J.C."/>
            <person name="Saunders D."/>
            <person name="Seeger K."/>
            <person name="Squares R."/>
            <person name="Squares S."/>
            <person name="Takeuchi M."/>
            <person name="Tekaia F."/>
            <person name="Turner G."/>
            <person name="Vazquez de Aldana C.R."/>
            <person name="Weidman J."/>
            <person name="White O."/>
            <person name="Woodward J.R."/>
            <person name="Yu J.-H."/>
            <person name="Fraser C.M."/>
            <person name="Galagan J.E."/>
            <person name="Asai K."/>
            <person name="Machida M."/>
            <person name="Hall N."/>
            <person name="Barrell B.G."/>
            <person name="Denning D.W."/>
        </authorList>
    </citation>
    <scope>NUCLEOTIDE SEQUENCE [LARGE SCALE GENOMIC DNA]</scope>
    <source>
        <strain>ATCC MYA-4609 / CBS 101355 / FGSC A1100 / Af293</strain>
    </source>
</reference>
<reference key="2">
    <citation type="journal article" date="2005" name="Med. Mycol.">
        <title>The ergosterol biosynthesis pathway, transporter genes, and azole resistance in Aspergillus fumigatus.</title>
        <authorList>
            <person name="Ferreira M.E."/>
            <person name="Colombo A.L."/>
            <person name="Paulsen I."/>
            <person name="Ren Q."/>
            <person name="Wortman J."/>
            <person name="Huang J."/>
            <person name="Goldman M.H."/>
            <person name="Goldman G.H."/>
        </authorList>
    </citation>
    <scope>IDENTIFICATION</scope>
    <scope>FUNCTION</scope>
</reference>
<reference key="3">
    <citation type="journal article" date="2012" name="Proc. Natl. Acad. Sci. U.S.A.">
        <title>Mevalonate governs interdependency of ergosterol and siderophore biosyntheses in the fungal pathogen Aspergillus fumigatus.</title>
        <authorList>
            <person name="Yasmin S."/>
            <person name="Alcazar-Fuoli L."/>
            <person name="Gruendlinger M."/>
            <person name="Puempel T."/>
            <person name="Cairns T."/>
            <person name="Blatzer M."/>
            <person name="Lopez J.F."/>
            <person name="Grimalt J.O."/>
            <person name="Bignell E."/>
            <person name="Haas H."/>
        </authorList>
    </citation>
    <scope>FUNCTION</scope>
</reference>
<name>ER13B_ASPFU</name>
<accession>Q4WXT8</accession>
<keyword id="KW-0012">Acyltransferase</keyword>
<keyword id="KW-0444">Lipid biosynthesis</keyword>
<keyword id="KW-0443">Lipid metabolism</keyword>
<keyword id="KW-1185">Reference proteome</keyword>
<keyword id="KW-0752">Steroid biosynthesis</keyword>
<keyword id="KW-0753">Steroid metabolism</keyword>
<keyword id="KW-0756">Sterol biosynthesis</keyword>
<keyword id="KW-1207">Sterol metabolism</keyword>
<keyword id="KW-0808">Transferase</keyword>
<proteinExistence type="inferred from homology"/>
<evidence type="ECO:0000250" key="1">
    <source>
        <dbReference type="UniProtKB" id="P41338"/>
    </source>
</evidence>
<evidence type="ECO:0000250" key="2">
    <source>
        <dbReference type="UniProtKB" id="P54868"/>
    </source>
</evidence>
<evidence type="ECO:0000255" key="3">
    <source>
        <dbReference type="PROSITE-ProRule" id="PRU10116"/>
    </source>
</evidence>
<evidence type="ECO:0000303" key="4">
    <source>
    </source>
</evidence>
<evidence type="ECO:0000305" key="5"/>
<evidence type="ECO:0000305" key="6">
    <source>
    </source>
</evidence>
<evidence type="ECO:0000305" key="7">
    <source>
    </source>
</evidence>
<organism>
    <name type="scientific">Aspergillus fumigatus (strain ATCC MYA-4609 / CBS 101355 / FGSC A1100 / Af293)</name>
    <name type="common">Neosartorya fumigata</name>
    <dbReference type="NCBI Taxonomy" id="330879"/>
    <lineage>
        <taxon>Eukaryota</taxon>
        <taxon>Fungi</taxon>
        <taxon>Dikarya</taxon>
        <taxon>Ascomycota</taxon>
        <taxon>Pezizomycotina</taxon>
        <taxon>Eurotiomycetes</taxon>
        <taxon>Eurotiomycetidae</taxon>
        <taxon>Eurotiales</taxon>
        <taxon>Aspergillaceae</taxon>
        <taxon>Aspergillus</taxon>
        <taxon>Aspergillus subgen. Fumigati</taxon>
    </lineage>
</organism>
<gene>
    <name evidence="4" type="primary">erg13B</name>
    <name type="ORF">AFUA_3G10660</name>
</gene>
<dbReference type="EC" id="2.3.3.10" evidence="1"/>
<dbReference type="EMBL" id="AAHF01000002">
    <property type="protein sequence ID" value="EAL92515.1"/>
    <property type="molecule type" value="Genomic_DNA"/>
</dbReference>
<dbReference type="RefSeq" id="XP_754553.1">
    <property type="nucleotide sequence ID" value="XM_749460.1"/>
</dbReference>
<dbReference type="SMR" id="Q4WXT8"/>
<dbReference type="FunCoup" id="Q4WXT8">
    <property type="interactions" value="666"/>
</dbReference>
<dbReference type="STRING" id="330879.Q4WXT8"/>
<dbReference type="EnsemblFungi" id="EAL92515">
    <property type="protein sequence ID" value="EAL92515"/>
    <property type="gene ID" value="AFUA_3G10660"/>
</dbReference>
<dbReference type="GeneID" id="3512339"/>
<dbReference type="KEGG" id="afm:AFUA_3G10660"/>
<dbReference type="VEuPathDB" id="FungiDB:Afu3g10660"/>
<dbReference type="eggNOG" id="KOG1393">
    <property type="taxonomic scope" value="Eukaryota"/>
</dbReference>
<dbReference type="HOGENOM" id="CLU_008065_0_1_1"/>
<dbReference type="InParanoid" id="Q4WXT8"/>
<dbReference type="OMA" id="DDAYNWI"/>
<dbReference type="OrthoDB" id="1269963at2759"/>
<dbReference type="UniPathway" id="UPA00058">
    <property type="reaction ID" value="UER00102"/>
</dbReference>
<dbReference type="Proteomes" id="UP000002530">
    <property type="component" value="Chromosome 3"/>
</dbReference>
<dbReference type="GO" id="GO:0004421">
    <property type="term" value="F:hydroxymethylglutaryl-CoA synthase activity"/>
    <property type="evidence" value="ECO:0000318"/>
    <property type="project" value="GO_Central"/>
</dbReference>
<dbReference type="GO" id="GO:0006084">
    <property type="term" value="P:acetyl-CoA metabolic process"/>
    <property type="evidence" value="ECO:0000318"/>
    <property type="project" value="GO_Central"/>
</dbReference>
<dbReference type="GO" id="GO:0006696">
    <property type="term" value="P:ergosterol biosynthetic process"/>
    <property type="evidence" value="ECO:0000318"/>
    <property type="project" value="GO_Central"/>
</dbReference>
<dbReference type="GO" id="GO:0010142">
    <property type="term" value="P:farnesyl diphosphate biosynthetic process, mevalonate pathway"/>
    <property type="evidence" value="ECO:0000318"/>
    <property type="project" value="GO_Central"/>
</dbReference>
<dbReference type="CDD" id="cd00827">
    <property type="entry name" value="init_cond_enzymes"/>
    <property type="match status" value="1"/>
</dbReference>
<dbReference type="FunFam" id="3.40.47.10:FF:000008">
    <property type="entry name" value="3-hydroxy-3-methylglutaryl coenzyme A synthase"/>
    <property type="match status" value="1"/>
</dbReference>
<dbReference type="Gene3D" id="3.40.47.10">
    <property type="match status" value="1"/>
</dbReference>
<dbReference type="InterPro" id="IPR000590">
    <property type="entry name" value="HMG_CoA_synt_AS"/>
</dbReference>
<dbReference type="InterPro" id="IPR013746">
    <property type="entry name" value="HMG_CoA_synt_C_dom"/>
</dbReference>
<dbReference type="InterPro" id="IPR013528">
    <property type="entry name" value="HMG_CoA_synth_N"/>
</dbReference>
<dbReference type="InterPro" id="IPR010122">
    <property type="entry name" value="HMG_CoA_synthase_euk"/>
</dbReference>
<dbReference type="InterPro" id="IPR016039">
    <property type="entry name" value="Thiolase-like"/>
</dbReference>
<dbReference type="NCBIfam" id="TIGR01833">
    <property type="entry name" value="HMG-CoA-S_euk"/>
    <property type="match status" value="1"/>
</dbReference>
<dbReference type="PANTHER" id="PTHR43323">
    <property type="entry name" value="3-HYDROXY-3-METHYLGLUTARYL COENZYME A SYNTHASE"/>
    <property type="match status" value="1"/>
</dbReference>
<dbReference type="PANTHER" id="PTHR43323:SF2">
    <property type="entry name" value="HYDROXYMETHYLGLUTARYL-COA SYNTHASE"/>
    <property type="match status" value="1"/>
</dbReference>
<dbReference type="Pfam" id="PF08540">
    <property type="entry name" value="HMG_CoA_synt_C"/>
    <property type="match status" value="1"/>
</dbReference>
<dbReference type="Pfam" id="PF01154">
    <property type="entry name" value="HMG_CoA_synt_N"/>
    <property type="match status" value="1"/>
</dbReference>
<dbReference type="SUPFAM" id="SSF53901">
    <property type="entry name" value="Thiolase-like"/>
    <property type="match status" value="2"/>
</dbReference>
<dbReference type="PROSITE" id="PS01226">
    <property type="entry name" value="HMG_COA_SYNTHASE"/>
    <property type="match status" value="1"/>
</dbReference>
<feature type="chain" id="PRO_0000454149" description="Hydroxymethylglutaryl-CoA synthase erg13B">
    <location>
        <begin position="1"/>
        <end position="460"/>
    </location>
</feature>
<feature type="active site" description="Proton donor/acceptor" evidence="3">
    <location>
        <position position="86"/>
    </location>
</feature>
<feature type="active site" description="Acyl-thioester intermediate" evidence="3">
    <location>
        <position position="120"/>
    </location>
</feature>
<feature type="active site" description="Proton donor/acceptor" evidence="3">
    <location>
        <position position="263"/>
    </location>
</feature>
<feature type="binding site" evidence="2">
    <location>
        <position position="120"/>
    </location>
    <ligand>
        <name>(3S)-3-hydroxy-3-methylglutaryl-CoA</name>
        <dbReference type="ChEBI" id="CHEBI:43074"/>
    </ligand>
</feature>
<feature type="binding site" evidence="2">
    <location>
        <position position="162"/>
    </location>
    <ligand>
        <name>(3S)-3-hydroxy-3-methylglutaryl-CoA</name>
        <dbReference type="ChEBI" id="CHEBI:43074"/>
    </ligand>
</feature>
<feature type="binding site" evidence="2">
    <location>
        <position position="212"/>
    </location>
    <ligand>
        <name>(3S)-3-hydroxy-3-methylglutaryl-CoA</name>
        <dbReference type="ChEBI" id="CHEBI:43074"/>
    </ligand>
</feature>
<feature type="binding site" evidence="2">
    <location>
        <position position="263"/>
    </location>
    <ligand>
        <name>(3S)-3-hydroxy-3-methylglutaryl-CoA</name>
        <dbReference type="ChEBI" id="CHEBI:43074"/>
    </ligand>
</feature>
<feature type="binding site" evidence="2">
    <location>
        <position position="272"/>
    </location>
    <ligand>
        <name>(3S)-3-hydroxy-3-methylglutaryl-CoA</name>
        <dbReference type="ChEBI" id="CHEBI:43074"/>
    </ligand>
</feature>
<feature type="binding site" evidence="2">
    <location>
        <position position="340"/>
    </location>
    <ligand>
        <name>(3S)-3-hydroxy-3-methylglutaryl-CoA</name>
        <dbReference type="ChEBI" id="CHEBI:43074"/>
    </ligand>
</feature>
<feature type="binding site" evidence="2">
    <location>
        <position position="374"/>
    </location>
    <ligand>
        <name>(3S)-3-hydroxy-3-methylglutaryl-CoA</name>
        <dbReference type="ChEBI" id="CHEBI:43074"/>
    </ligand>
</feature>
<protein>
    <recommendedName>
        <fullName evidence="1">Hydroxymethylglutaryl-CoA synthase erg13B</fullName>
        <shortName evidence="1">HMG-CoA synthase</shortName>
        <ecNumber evidence="1">2.3.3.10</ecNumber>
    </recommendedName>
    <alternativeName>
        <fullName evidence="1">3-hydroxy-3-methylglutaryl coenzyme A synthase erg13B</fullName>
    </alternativeName>
    <alternativeName>
        <fullName evidence="4">Ergosterol biosynthesis protein 13B</fullName>
    </alternativeName>
</protein>
<comment type="function">
    <text evidence="1 6 7">Hydroxymethylglutaryl-CoA synthase; part of the first module of ergosterol biosynthesis pathway that includes the early steps of the pathway, conserved across all eukaryotes, and which results in the formation of mevalonate from acetyl-coenzyme A (acetyl-CoA) (By similarity). Erg13A and erg13B condense acetyl-CoA with acetoacetyl-CoA to form hydroxymethylglutaryl-CoA (HMG-CoA) (By similarity). The first module starts with the action of the cytosolic acetyl-CoA acetyltransferase erg10B that catalyzes the formation of acetoacetyl-CoA. The hydroxymethylglutaryl-CoA synthases erg13A and erg13B then condense acetyl-CoA with acetoacetyl-CoA to form HMG-CoA. The rate-limiting step of the early module is the reduction to mevalonate by the 3-hydroxy-3-methylglutaryl-coenzyme A (HMG-CoA) reductases hmg1 and hmg2. Mevalonate is also a precursor for the extracellular siderophore triacetylfusarinine C (TAFC) (Probable) (PubMed:16110826, PubMed:22106303).</text>
</comment>
<comment type="catalytic activity">
    <reaction evidence="1 3">
        <text>acetoacetyl-CoA + acetyl-CoA + H2O = (3S)-3-hydroxy-3-methylglutaryl-CoA + CoA + H(+)</text>
        <dbReference type="Rhea" id="RHEA:10188"/>
        <dbReference type="ChEBI" id="CHEBI:15377"/>
        <dbReference type="ChEBI" id="CHEBI:15378"/>
        <dbReference type="ChEBI" id="CHEBI:43074"/>
        <dbReference type="ChEBI" id="CHEBI:57286"/>
        <dbReference type="ChEBI" id="CHEBI:57287"/>
        <dbReference type="ChEBI" id="CHEBI:57288"/>
        <dbReference type="EC" id="2.3.3.10"/>
    </reaction>
    <physiologicalReaction direction="left-to-right" evidence="1">
        <dbReference type="Rhea" id="RHEA:10189"/>
    </physiologicalReaction>
</comment>
<comment type="pathway">
    <text evidence="1">Metabolic intermediate biosynthesis; (R)-mevalonate biosynthesis; (R)-mevalonate from acetyl-CoA: step 2/3.</text>
</comment>
<comment type="similarity">
    <text evidence="5">Belongs to the thiolase-like superfamily. HMG-CoA synthase family.</text>
</comment>
<sequence length="460" mass="50797">MSARPQNVGIKAIEVYFPSQCVDQAELEKFDGVSEGKYTIGLGQTKMSFCDDREDIYSIALTTCSSLLRKYNIDPKSIGRLEVGTETLLDKSKSVKSVLMQLFAPHGNTNIEGVDTVNACYGGTNAVFNSINWVESSAWDGRDAIVVCGDIALYAKGAARPTGGAGAVAMLIGPDAPIVFEPGLRGSYVTHAYDFFKPDLTSEYPVVDGHFSLKCYTEAVDACYKAYAAREKVLKAKVQNGTNGVENDETKTPLDRFDYVLFHAPTCKLVQKSYGRMLYNDYLANPSHPAFAEVPSELRDLDYEKSFTDKTVEKTFMGLTKKTFAERVRPGLDVATLCGNMYTATVYAGLASLLSNVTFDPSQPKRVALFSYGSGLASSMFSVKIVGDVSGMVEKLDLHKRLNARTVLPPQTYDEMCILREHAHLKKNFKPTGNPDTLFPGTYYLTEIDDMFRRKYEIKA</sequence>